<comment type="function">
    <text evidence="1">Required for the first step of diphthamide biosynthesis, a post-translational modification of histidine which occurs in elongation factor 2. Dph-1 and dph-2 transfer a 3-amino-3-carboxypropyl (ACP) group from S-adenosyl-L-methionine (SAM) to a histidine residue, the reaction is assisted by a reduction system comprising dph-3 and a NADH-dependent reductase. Acts as an electron donor to reduce the Fe-S cluster in dph1-dph2 keeping the [4Fe-4S] clusters in the active and reduced state. Restores iron to dph-1-dph-2 iron-sulfur clusters which have degraded from [4Fe-4S] to [3Fe-4S] by donating an iron atom to reform [4Fe-4S] clusters, in a manner dependent on the presence of elongation factor 2 and SAM. Associates with the elongator complex and is required for tRNA Wobble base modifications mediated by the elongator complex. The elongator complex is required for multiple tRNA modifications, including mcm5U (5-methoxycarbonylmethyl uridine), mcm5s 2U (5-methoxycarbonylmethyl-2-thiouridine), and ncm5U (5-carbamoylmethyl uridine).</text>
</comment>
<comment type="catalytic activity">
    <reaction evidence="1">
        <text>[3Fe-4S](1+)-[protein] + Fe(2+)-[Dph3] = [3Fe-4S](0)-[protein] + Fe(3+)-[Dph3]</text>
        <dbReference type="Rhea" id="RHEA:71235"/>
        <dbReference type="Rhea" id="RHEA-COMP:17996"/>
        <dbReference type="Rhea" id="RHEA-COMP:17997"/>
        <dbReference type="Rhea" id="RHEA-COMP:18002"/>
        <dbReference type="Rhea" id="RHEA-COMP:18003"/>
        <dbReference type="ChEBI" id="CHEBI:29033"/>
        <dbReference type="ChEBI" id="CHEBI:29034"/>
        <dbReference type="ChEBI" id="CHEBI:33751"/>
        <dbReference type="ChEBI" id="CHEBI:47402"/>
        <dbReference type="ChEBI" id="CHEBI:83228"/>
    </reaction>
</comment>
<comment type="catalytic activity">
    <reaction evidence="1">
        <text>2 [3Fe-4S](0)-[protein] + 2 Fe(2+)-[Dph3] + NADH = 2 [4Fe-4S](1+)-[protein] + 2 [Dph3] + NAD(+) + H(+)</text>
        <dbReference type="Rhea" id="RHEA:71239"/>
        <dbReference type="Rhea" id="RHEA-COMP:17997"/>
        <dbReference type="Rhea" id="RHEA-COMP:17998"/>
        <dbReference type="Rhea" id="RHEA-COMP:18001"/>
        <dbReference type="Rhea" id="RHEA-COMP:18002"/>
        <dbReference type="ChEBI" id="CHEBI:15378"/>
        <dbReference type="ChEBI" id="CHEBI:29033"/>
        <dbReference type="ChEBI" id="CHEBI:33723"/>
        <dbReference type="ChEBI" id="CHEBI:47402"/>
        <dbReference type="ChEBI" id="CHEBI:57540"/>
        <dbReference type="ChEBI" id="CHEBI:57945"/>
        <dbReference type="ChEBI" id="CHEBI:83228"/>
    </reaction>
</comment>
<comment type="cofactor">
    <cofactor evidence="1">
        <name>Fe(2+)</name>
        <dbReference type="ChEBI" id="CHEBI:29033"/>
    </cofactor>
</comment>
<comment type="pathway">
    <text evidence="3">Protein modification; peptidyl-diphthamide biosynthesis.</text>
</comment>
<comment type="subunit">
    <text evidence="1">Component of the 2-(3-amino-3-carboxypropyl)histidine synthase complex composed of dph-1, dph-2, dph-3 and a NADH-dependent reductase.</text>
</comment>
<comment type="domain">
    <text evidence="1">The DPH-type metal-binding (MB) domain can also bind zinc. However, iron is the physiological binding partner as zinc binding impairs the protein electron donor function.</text>
</comment>
<comment type="similarity">
    <text evidence="3">Belongs to the DPH3 family.</text>
</comment>
<organism>
    <name type="scientific">Caenorhabditis elegans</name>
    <dbReference type="NCBI Taxonomy" id="6239"/>
    <lineage>
        <taxon>Eukaryota</taxon>
        <taxon>Metazoa</taxon>
        <taxon>Ecdysozoa</taxon>
        <taxon>Nematoda</taxon>
        <taxon>Chromadorea</taxon>
        <taxon>Rhabditida</taxon>
        <taxon>Rhabditina</taxon>
        <taxon>Rhabditomorpha</taxon>
        <taxon>Rhabditoidea</taxon>
        <taxon>Rhabditidae</taxon>
        <taxon>Peloderinae</taxon>
        <taxon>Caenorhabditis</taxon>
    </lineage>
</organism>
<protein>
    <recommendedName>
        <fullName evidence="3">Diphthamide biosynthesis protein 3</fullName>
    </recommendedName>
</protein>
<dbReference type="EMBL" id="Z68218">
    <property type="protein sequence ID" value="CAA92471.1"/>
    <property type="molecule type" value="Genomic_DNA"/>
</dbReference>
<dbReference type="PIR" id="T23206">
    <property type="entry name" value="T23206"/>
</dbReference>
<dbReference type="RefSeq" id="NP_001255419.1">
    <property type="nucleotide sequence ID" value="NM_001268490.2"/>
</dbReference>
<dbReference type="SMR" id="Q21102"/>
<dbReference type="FunCoup" id="Q21102">
    <property type="interactions" value="2634"/>
</dbReference>
<dbReference type="STRING" id="6239.K01H12.1a.1"/>
<dbReference type="PaxDb" id="6239-K01H12.1a"/>
<dbReference type="EnsemblMetazoa" id="K01H12.1a.1">
    <property type="protein sequence ID" value="K01H12.1a.1"/>
    <property type="gene ID" value="WBGene00010484"/>
</dbReference>
<dbReference type="GeneID" id="186854"/>
<dbReference type="KEGG" id="cel:CELE_K01H12.1"/>
<dbReference type="UCSC" id="K01H12.1">
    <property type="organism name" value="c. elegans"/>
</dbReference>
<dbReference type="AGR" id="WB:WBGene00010484"/>
<dbReference type="CTD" id="186854"/>
<dbReference type="WormBase" id="K01H12.1a">
    <property type="protein sequence ID" value="CE03453"/>
    <property type="gene ID" value="WBGene00010484"/>
    <property type="gene designation" value="dph-3"/>
</dbReference>
<dbReference type="eggNOG" id="KOG2923">
    <property type="taxonomic scope" value="Eukaryota"/>
</dbReference>
<dbReference type="GeneTree" id="ENSGT00940000171548"/>
<dbReference type="HOGENOM" id="CLU_155991_3_0_1"/>
<dbReference type="InParanoid" id="Q21102"/>
<dbReference type="OMA" id="IYDPDMF"/>
<dbReference type="OrthoDB" id="66964at2759"/>
<dbReference type="PhylomeDB" id="Q21102"/>
<dbReference type="Reactome" id="R-CEL-5358493">
    <property type="pathway name" value="Synthesis of diphthamide-EEF2"/>
</dbReference>
<dbReference type="UniPathway" id="UPA00559"/>
<dbReference type="PRO" id="PR:Q21102"/>
<dbReference type="Proteomes" id="UP000001940">
    <property type="component" value="Chromosome IV"/>
</dbReference>
<dbReference type="Bgee" id="WBGene00010484">
    <property type="expression patterns" value="Expressed in pharyngeal muscle cell (C elegans) and 4 other cell types or tissues"/>
</dbReference>
<dbReference type="ExpressionAtlas" id="Q21102">
    <property type="expression patterns" value="baseline and differential"/>
</dbReference>
<dbReference type="GO" id="GO:0005634">
    <property type="term" value="C:nucleus"/>
    <property type="evidence" value="ECO:0007005"/>
    <property type="project" value="WormBase"/>
</dbReference>
<dbReference type="GO" id="GO:0008198">
    <property type="term" value="F:ferrous iron binding"/>
    <property type="evidence" value="ECO:0000250"/>
    <property type="project" value="UniProtKB"/>
</dbReference>
<dbReference type="GO" id="GO:0034986">
    <property type="term" value="F:iron chaperone activity"/>
    <property type="evidence" value="ECO:0000250"/>
    <property type="project" value="UniProtKB"/>
</dbReference>
<dbReference type="GO" id="GO:0016491">
    <property type="term" value="F:oxidoreductase activity"/>
    <property type="evidence" value="ECO:0007669"/>
    <property type="project" value="UniProtKB-KW"/>
</dbReference>
<dbReference type="GO" id="GO:0017183">
    <property type="term" value="P:protein histidyl modification to diphthamide"/>
    <property type="evidence" value="ECO:0000250"/>
    <property type="project" value="UniProtKB"/>
</dbReference>
<dbReference type="GO" id="GO:0002926">
    <property type="term" value="P:tRNA wobble base 5-methoxycarbonylmethyl-2-thiouridinylation"/>
    <property type="evidence" value="ECO:0000250"/>
    <property type="project" value="UniProtKB"/>
</dbReference>
<dbReference type="FunFam" id="3.10.660.10:FF:000001">
    <property type="entry name" value="Diphthamide biosynthesis 3"/>
    <property type="match status" value="1"/>
</dbReference>
<dbReference type="Gene3D" id="3.10.660.10">
    <property type="entry name" value="DPH Zinc finger"/>
    <property type="match status" value="1"/>
</dbReference>
<dbReference type="InterPro" id="IPR044248">
    <property type="entry name" value="DPH3/4-like"/>
</dbReference>
<dbReference type="InterPro" id="IPR007872">
    <property type="entry name" value="DPH_MB_dom"/>
</dbReference>
<dbReference type="InterPro" id="IPR036671">
    <property type="entry name" value="DPH_MB_sf"/>
</dbReference>
<dbReference type="PANTHER" id="PTHR21454:SF31">
    <property type="entry name" value="DIPHTHAMIDE BIOSYNTHESIS PROTEIN 3"/>
    <property type="match status" value="1"/>
</dbReference>
<dbReference type="PANTHER" id="PTHR21454">
    <property type="entry name" value="DPH3 HOMOLOG-RELATED"/>
    <property type="match status" value="1"/>
</dbReference>
<dbReference type="Pfam" id="PF05207">
    <property type="entry name" value="Zn_ribbon_CSL"/>
    <property type="match status" value="1"/>
</dbReference>
<dbReference type="SUPFAM" id="SSF144217">
    <property type="entry name" value="CSL zinc finger"/>
    <property type="match status" value="1"/>
</dbReference>
<dbReference type="PROSITE" id="PS51074">
    <property type="entry name" value="DPH_MB"/>
    <property type="match status" value="1"/>
</dbReference>
<sequence length="80" mass="9303">MSVFHDEVEIEDFEFDEEKDVYHYPCPCGDRFEIPREMLEMGEDVAQCPSCSLLIRVIYDPEDFVKLETISTSKPIAEPV</sequence>
<reference key="1">
    <citation type="journal article" date="1998" name="Science">
        <title>Genome sequence of the nematode C. elegans: a platform for investigating biology.</title>
        <authorList>
            <consortium name="The C. elegans sequencing consortium"/>
        </authorList>
    </citation>
    <scope>NUCLEOTIDE SEQUENCE [LARGE SCALE GENOMIC DNA]</scope>
    <source>
        <strain>Bristol N2</strain>
    </source>
</reference>
<proteinExistence type="inferred from homology"/>
<evidence type="ECO:0000250" key="1">
    <source>
        <dbReference type="UniProtKB" id="Q3E840"/>
    </source>
</evidence>
<evidence type="ECO:0000255" key="2">
    <source>
        <dbReference type="PROSITE-ProRule" id="PRU00456"/>
    </source>
</evidence>
<evidence type="ECO:0000305" key="3"/>
<name>DPH3_CAEEL</name>
<feature type="chain" id="PRO_0000082624" description="Diphthamide biosynthesis protein 3">
    <location>
        <begin position="1"/>
        <end position="80"/>
    </location>
</feature>
<feature type="domain" description="DPH-type MB" evidence="2">
    <location>
        <begin position="4"/>
        <end position="60"/>
    </location>
</feature>
<feature type="binding site" evidence="1">
    <location>
        <position position="26"/>
    </location>
    <ligand>
        <name>Fe cation</name>
        <dbReference type="ChEBI" id="CHEBI:24875"/>
    </ligand>
</feature>
<feature type="binding site" evidence="1">
    <location>
        <position position="28"/>
    </location>
    <ligand>
        <name>Fe cation</name>
        <dbReference type="ChEBI" id="CHEBI:24875"/>
    </ligand>
</feature>
<feature type="binding site" evidence="1">
    <location>
        <position position="48"/>
    </location>
    <ligand>
        <name>Fe cation</name>
        <dbReference type="ChEBI" id="CHEBI:24875"/>
    </ligand>
</feature>
<feature type="binding site" evidence="1">
    <location>
        <position position="51"/>
    </location>
    <ligand>
        <name>Fe cation</name>
        <dbReference type="ChEBI" id="CHEBI:24875"/>
    </ligand>
</feature>
<keyword id="KW-0408">Iron</keyword>
<keyword id="KW-0479">Metal-binding</keyword>
<keyword id="KW-0560">Oxidoreductase</keyword>
<keyword id="KW-1185">Reference proteome</keyword>
<gene>
    <name evidence="3" type="primary">dph-3</name>
    <name type="ORF">K01H12.1</name>
</gene>
<accession>Q21102</accession>